<proteinExistence type="evidence at protein level"/>
<sequence length="15" mass="1699">CCNWPCSFGCIPCCY</sequence>
<accession>P0CH15</accession>
<dbReference type="GO" id="GO:0005576">
    <property type="term" value="C:extracellular region"/>
    <property type="evidence" value="ECO:0007669"/>
    <property type="project" value="UniProtKB-SubCell"/>
</dbReference>
<dbReference type="GO" id="GO:0099106">
    <property type="term" value="F:ion channel regulator activity"/>
    <property type="evidence" value="ECO:0007669"/>
    <property type="project" value="UniProtKB-KW"/>
</dbReference>
<dbReference type="GO" id="GO:0090729">
    <property type="term" value="F:toxin activity"/>
    <property type="evidence" value="ECO:0007669"/>
    <property type="project" value="UniProtKB-KW"/>
</dbReference>
<name>CM3A_CONPI</name>
<comment type="function">
    <text evidence="2 4">Probable neurotoxin with unknown target (Probable). Possibly targets ion channels (Probable). In vivo, intraperitoneal injection into fish provokes paralysis after 5 minutes (PubMed:20570703).</text>
</comment>
<comment type="subcellular location">
    <subcellularLocation>
        <location evidence="2">Secreted</location>
    </subcellularLocation>
</comment>
<comment type="tissue specificity">
    <text evidence="5">Expressed by the venom duct.</text>
</comment>
<comment type="domain">
    <text evidence="4">The cysteine framework is III (CC-C-C-CC). Classified in the M-2 branch, since 2 residues stand between the fourth and the fifth cysteine residues.</text>
</comment>
<comment type="PTM">
    <text evidence="5">Both Pro-5 and Pro-12 are not hydroxylated, and Tyr-15 is not amidated.</text>
</comment>
<comment type="mass spectrometry" mass="1692.4" method="MALDI" evidence="2">
    <text>Monoisotopic mass.</text>
</comment>
<comment type="miscellaneous">
    <text>Authors confirmed the assignment of this toxin to the M superfamily by cDNA sequencing.</text>
</comment>
<comment type="similarity">
    <text evidence="4">Belongs to the conotoxin M superfamily.</text>
</comment>
<reference key="1">
    <citation type="journal article" date="2010" name="Peptides">
        <title>Divergent M- and O-superfamily peptides from venom of fish-hunting Conus parius.</title>
        <authorList>
            <person name="Jimenez E.C."/>
            <person name="Olivera B.M."/>
        </authorList>
    </citation>
    <scope>PROTEIN SEQUENCE</scope>
    <scope>NUCLEOTIDE SEQUENCE [MRNA]</scope>
    <scope>FUNCTION</scope>
    <scope>MASS SPECTROMETRY</scope>
    <scope>SUBCELLULAR LOCATION</scope>
    <source>
        <tissue>Venom</tissue>
        <tissue>Venom duct</tissue>
    </source>
</reference>
<keyword id="KW-0903">Direct protein sequencing</keyword>
<keyword id="KW-1015">Disulfide bond</keyword>
<keyword id="KW-0872">Ion channel impairing toxin</keyword>
<keyword id="KW-0528">Neurotoxin</keyword>
<keyword id="KW-0964">Secreted</keyword>
<keyword id="KW-0800">Toxin</keyword>
<evidence type="ECO:0000250" key="1">
    <source>
        <dbReference type="UniProtKB" id="P0CI24"/>
    </source>
</evidence>
<evidence type="ECO:0000269" key="2">
    <source>
    </source>
</evidence>
<evidence type="ECO:0000303" key="3">
    <source>
    </source>
</evidence>
<evidence type="ECO:0000305" key="4"/>
<evidence type="ECO:0000305" key="5">
    <source>
    </source>
</evidence>
<protein>
    <recommendedName>
        <fullName evidence="3">Conotoxin pr3a</fullName>
    </recommendedName>
</protein>
<organism>
    <name type="scientific">Conus parius</name>
    <name type="common">Cone snail</name>
    <dbReference type="NCBI Taxonomy" id="505247"/>
    <lineage>
        <taxon>Eukaryota</taxon>
        <taxon>Metazoa</taxon>
        <taxon>Spiralia</taxon>
        <taxon>Lophotrochozoa</taxon>
        <taxon>Mollusca</taxon>
        <taxon>Gastropoda</taxon>
        <taxon>Caenogastropoda</taxon>
        <taxon>Neogastropoda</taxon>
        <taxon>Conoidea</taxon>
        <taxon>Conidae</taxon>
        <taxon>Conus</taxon>
        <taxon>Phasmoconus</taxon>
    </lineage>
</organism>
<feature type="peptide" id="PRO_0000397113" description="Conotoxin pr3a" evidence="2">
    <location>
        <begin position="1"/>
        <end position="15"/>
    </location>
</feature>
<feature type="disulfide bond" evidence="1">
    <location>
        <begin position="1"/>
        <end position="14"/>
    </location>
</feature>
<feature type="disulfide bond" evidence="1">
    <location>
        <begin position="2"/>
        <end position="10"/>
    </location>
</feature>
<feature type="disulfide bond" evidence="1">
    <location>
        <begin position="6"/>
        <end position="13"/>
    </location>
</feature>